<protein>
    <recommendedName>
        <fullName>Isovaleryl-CoA dehydrogenase, mitochondrial</fullName>
        <shortName>IVD</shortName>
        <ecNumber evidence="2">1.3.8.4</ecNumber>
    </recommendedName>
    <alternativeName>
        <fullName>Butyryl-CoA dehydrogenase</fullName>
        <ecNumber evidence="2">1.3.8.1</ecNumber>
    </alternativeName>
</protein>
<comment type="function">
    <text evidence="2">Catalyzes the conversion of isovaleryl-CoA/3-methylbutanoyl-CoA to 3-methylbut-2-enoyl-CoA as an intermediate step in the leucine (Leu) catabolic pathway. To a lesser extent, is also able to catalyze the oxidation of other saturated short-chain acyl-CoA thioesters as pentanoyl-CoA, hexenoyl-CoA and butenoyl-CoA.</text>
</comment>
<comment type="catalytic activity">
    <reaction evidence="2">
        <text>3-methylbutanoyl-CoA + oxidized [electron-transfer flavoprotein] + H(+) = 3-methylbut-2-enoyl-CoA + reduced [electron-transfer flavoprotein]</text>
        <dbReference type="Rhea" id="RHEA:12276"/>
        <dbReference type="Rhea" id="RHEA-COMP:10685"/>
        <dbReference type="Rhea" id="RHEA-COMP:10686"/>
        <dbReference type="ChEBI" id="CHEBI:15378"/>
        <dbReference type="ChEBI" id="CHEBI:57344"/>
        <dbReference type="ChEBI" id="CHEBI:57345"/>
        <dbReference type="ChEBI" id="CHEBI:57692"/>
        <dbReference type="ChEBI" id="CHEBI:58307"/>
        <dbReference type="EC" id="1.3.8.4"/>
    </reaction>
</comment>
<comment type="catalytic activity">
    <reaction evidence="2">
        <text>pentanoyl-CoA + oxidized [electron-transfer flavoprotein] + H(+) = (2E)-pentenoyl-CoA + reduced [electron-transfer flavoprotein]</text>
        <dbReference type="Rhea" id="RHEA:43456"/>
        <dbReference type="Rhea" id="RHEA-COMP:10685"/>
        <dbReference type="Rhea" id="RHEA-COMP:10686"/>
        <dbReference type="ChEBI" id="CHEBI:15378"/>
        <dbReference type="ChEBI" id="CHEBI:57389"/>
        <dbReference type="ChEBI" id="CHEBI:57692"/>
        <dbReference type="ChEBI" id="CHEBI:58307"/>
        <dbReference type="ChEBI" id="CHEBI:86160"/>
    </reaction>
</comment>
<comment type="catalytic activity">
    <reaction evidence="2">
        <text>hexanoyl-CoA + oxidized [electron-transfer flavoprotein] + H(+) = (2E)-hexenoyl-CoA + reduced [electron-transfer flavoprotein]</text>
        <dbReference type="Rhea" id="RHEA:43464"/>
        <dbReference type="Rhea" id="RHEA-COMP:10685"/>
        <dbReference type="Rhea" id="RHEA-COMP:10686"/>
        <dbReference type="ChEBI" id="CHEBI:15378"/>
        <dbReference type="ChEBI" id="CHEBI:57692"/>
        <dbReference type="ChEBI" id="CHEBI:58307"/>
        <dbReference type="ChEBI" id="CHEBI:62077"/>
        <dbReference type="ChEBI" id="CHEBI:62620"/>
    </reaction>
</comment>
<comment type="catalytic activity">
    <reaction evidence="2">
        <text>butanoyl-CoA + oxidized [electron-transfer flavoprotein] + H(+) = (2E)-butenoyl-CoA + reduced [electron-transfer flavoprotein]</text>
        <dbReference type="Rhea" id="RHEA:24004"/>
        <dbReference type="Rhea" id="RHEA-COMP:10685"/>
        <dbReference type="Rhea" id="RHEA-COMP:10686"/>
        <dbReference type="ChEBI" id="CHEBI:15378"/>
        <dbReference type="ChEBI" id="CHEBI:57332"/>
        <dbReference type="ChEBI" id="CHEBI:57371"/>
        <dbReference type="ChEBI" id="CHEBI:57692"/>
        <dbReference type="ChEBI" id="CHEBI:58307"/>
        <dbReference type="EC" id="1.3.8.1"/>
    </reaction>
</comment>
<comment type="cofactor">
    <cofactor evidence="2">
        <name>FAD</name>
        <dbReference type="ChEBI" id="CHEBI:57692"/>
    </cofactor>
</comment>
<comment type="pathway">
    <text>Amino-acid degradation; L-leucine degradation; (S)-3-hydroxy-3-methylglutaryl-CoA from 3-isovaleryl-CoA: step 1/3.</text>
</comment>
<comment type="subunit">
    <text evidence="2">Homotetramer.</text>
</comment>
<comment type="subcellular location">
    <subcellularLocation>
        <location evidence="1">Mitochondrion matrix</location>
    </subcellularLocation>
</comment>
<comment type="similarity">
    <text evidence="4">Belongs to the acyl-CoA dehydrogenase family.</text>
</comment>
<evidence type="ECO:0000250" key="1">
    <source>
        <dbReference type="UniProtKB" id="P12007"/>
    </source>
</evidence>
<evidence type="ECO:0000250" key="2">
    <source>
        <dbReference type="UniProtKB" id="P26440"/>
    </source>
</evidence>
<evidence type="ECO:0000250" key="3">
    <source>
        <dbReference type="UniProtKB" id="Q9JHI5"/>
    </source>
</evidence>
<evidence type="ECO:0000305" key="4"/>
<name>IVD_BOVIN</name>
<dbReference type="EC" id="1.3.8.4" evidence="2"/>
<dbReference type="EC" id="1.3.8.1" evidence="2"/>
<dbReference type="EMBL" id="BC102836">
    <property type="protein sequence ID" value="AAI02837.1"/>
    <property type="molecule type" value="mRNA"/>
</dbReference>
<dbReference type="RefSeq" id="NP_001029554.1">
    <property type="nucleotide sequence ID" value="NM_001034382.2"/>
</dbReference>
<dbReference type="SMR" id="Q3SZI8"/>
<dbReference type="FunCoup" id="Q3SZI8">
    <property type="interactions" value="2158"/>
</dbReference>
<dbReference type="IntAct" id="Q3SZI8">
    <property type="interactions" value="1"/>
</dbReference>
<dbReference type="STRING" id="9913.ENSBTAP00000005782"/>
<dbReference type="PaxDb" id="9913-ENSBTAP00000005782"/>
<dbReference type="PeptideAtlas" id="Q3SZI8"/>
<dbReference type="GeneID" id="510440"/>
<dbReference type="KEGG" id="bta:510440"/>
<dbReference type="CTD" id="3712"/>
<dbReference type="eggNOG" id="KOG0141">
    <property type="taxonomic scope" value="Eukaryota"/>
</dbReference>
<dbReference type="HOGENOM" id="CLU_018204_0_1_1"/>
<dbReference type="InParanoid" id="Q3SZI8"/>
<dbReference type="OrthoDB" id="9988775at2759"/>
<dbReference type="TreeFam" id="TF105050"/>
<dbReference type="UniPathway" id="UPA00363">
    <property type="reaction ID" value="UER00860"/>
</dbReference>
<dbReference type="Proteomes" id="UP000009136">
    <property type="component" value="Unplaced"/>
</dbReference>
<dbReference type="GO" id="GO:0005759">
    <property type="term" value="C:mitochondrial matrix"/>
    <property type="evidence" value="ECO:0000250"/>
    <property type="project" value="UniProtKB"/>
</dbReference>
<dbReference type="GO" id="GO:0005739">
    <property type="term" value="C:mitochondrion"/>
    <property type="evidence" value="ECO:0000318"/>
    <property type="project" value="GO_Central"/>
</dbReference>
<dbReference type="GO" id="GO:0008470">
    <property type="term" value="F:3-methylbutanoyl-CoA dehydrogenase activity"/>
    <property type="evidence" value="ECO:0000250"/>
    <property type="project" value="UniProtKB"/>
</dbReference>
<dbReference type="GO" id="GO:0050660">
    <property type="term" value="F:flavin adenine dinucleotide binding"/>
    <property type="evidence" value="ECO:0007669"/>
    <property type="project" value="InterPro"/>
</dbReference>
<dbReference type="GO" id="GO:0042802">
    <property type="term" value="F:identical protein binding"/>
    <property type="evidence" value="ECO:0000250"/>
    <property type="project" value="UniProtKB"/>
</dbReference>
<dbReference type="GO" id="GO:0009083">
    <property type="term" value="P:branched-chain amino acid catabolic process"/>
    <property type="evidence" value="ECO:0000250"/>
    <property type="project" value="UniProtKB"/>
</dbReference>
<dbReference type="GO" id="GO:0006552">
    <property type="term" value="P:L-leucine catabolic process"/>
    <property type="evidence" value="ECO:0000250"/>
    <property type="project" value="UniProtKB"/>
</dbReference>
<dbReference type="CDD" id="cd01156">
    <property type="entry name" value="IVD"/>
    <property type="match status" value="1"/>
</dbReference>
<dbReference type="FunFam" id="1.10.540.10:FF:000007">
    <property type="entry name" value="Isovaleryl-CoA dehydrogenase, mitochondrial"/>
    <property type="match status" value="1"/>
</dbReference>
<dbReference type="FunFam" id="2.40.110.10:FF:000004">
    <property type="entry name" value="Isovaleryl-CoA dehydrogenase, mitochondrial"/>
    <property type="match status" value="1"/>
</dbReference>
<dbReference type="FunFam" id="1.20.140.10:FF:000003">
    <property type="entry name" value="isovaleryl-CoA dehydrogenase, mitochondrial"/>
    <property type="match status" value="1"/>
</dbReference>
<dbReference type="Gene3D" id="1.10.540.10">
    <property type="entry name" value="Acyl-CoA dehydrogenase/oxidase, N-terminal domain"/>
    <property type="match status" value="1"/>
</dbReference>
<dbReference type="Gene3D" id="2.40.110.10">
    <property type="entry name" value="Butyryl-CoA Dehydrogenase, subunit A, domain 2"/>
    <property type="match status" value="1"/>
</dbReference>
<dbReference type="Gene3D" id="1.20.140.10">
    <property type="entry name" value="Butyryl-CoA Dehydrogenase, subunit A, domain 3"/>
    <property type="match status" value="1"/>
</dbReference>
<dbReference type="InterPro" id="IPR006089">
    <property type="entry name" value="Acyl-CoA_DH_CS"/>
</dbReference>
<dbReference type="InterPro" id="IPR006091">
    <property type="entry name" value="Acyl-CoA_Oxase/DH_mid-dom"/>
</dbReference>
<dbReference type="InterPro" id="IPR046373">
    <property type="entry name" value="Acyl-CoA_Oxase/DH_mid-dom_sf"/>
</dbReference>
<dbReference type="InterPro" id="IPR036250">
    <property type="entry name" value="AcylCo_DH-like_C"/>
</dbReference>
<dbReference type="InterPro" id="IPR009075">
    <property type="entry name" value="AcylCo_DH/oxidase_C"/>
</dbReference>
<dbReference type="InterPro" id="IPR013786">
    <property type="entry name" value="AcylCoA_DH/ox_N"/>
</dbReference>
<dbReference type="InterPro" id="IPR037069">
    <property type="entry name" value="AcylCoA_DH/ox_N_sf"/>
</dbReference>
<dbReference type="InterPro" id="IPR009100">
    <property type="entry name" value="AcylCoA_DH/oxidase_NM_dom_sf"/>
</dbReference>
<dbReference type="InterPro" id="IPR034183">
    <property type="entry name" value="IVD"/>
</dbReference>
<dbReference type="PANTHER" id="PTHR43884">
    <property type="entry name" value="ACYL-COA DEHYDROGENASE"/>
    <property type="match status" value="1"/>
</dbReference>
<dbReference type="PANTHER" id="PTHR43884:SF12">
    <property type="entry name" value="ISOVALERYL-COA DEHYDROGENASE, MITOCHONDRIAL-RELATED"/>
    <property type="match status" value="1"/>
</dbReference>
<dbReference type="Pfam" id="PF00441">
    <property type="entry name" value="Acyl-CoA_dh_1"/>
    <property type="match status" value="1"/>
</dbReference>
<dbReference type="Pfam" id="PF02770">
    <property type="entry name" value="Acyl-CoA_dh_M"/>
    <property type="match status" value="1"/>
</dbReference>
<dbReference type="Pfam" id="PF02771">
    <property type="entry name" value="Acyl-CoA_dh_N"/>
    <property type="match status" value="1"/>
</dbReference>
<dbReference type="SUPFAM" id="SSF47203">
    <property type="entry name" value="Acyl-CoA dehydrogenase C-terminal domain-like"/>
    <property type="match status" value="1"/>
</dbReference>
<dbReference type="SUPFAM" id="SSF56645">
    <property type="entry name" value="Acyl-CoA dehydrogenase NM domain-like"/>
    <property type="match status" value="1"/>
</dbReference>
<dbReference type="PROSITE" id="PS00072">
    <property type="entry name" value="ACYL_COA_DH_1"/>
    <property type="match status" value="1"/>
</dbReference>
<dbReference type="PROSITE" id="PS00073">
    <property type="entry name" value="ACYL_COA_DH_2"/>
    <property type="match status" value="1"/>
</dbReference>
<sequence length="426" mass="46498">MATAAWLLGRRVASWRMRPPLQSLAGLITQRTNSLLPVDDAVNGLNEEQKQLRQTVAKFLQEHLAPQAQEIDQSNEFKNLREFWKQLGNLGVLGITAPVQYGGSGLGFLENVLVMEEISRVSGAVGLSYGAHSNLCINQIVRNGNETQKEKYLPKLISGEYIGALAMSEPNAGSDVVSMKLKAEKKGDHYVLNGNKFWITNGPDADVLVVYAKTDVTAVPASRGITAFIVEKGMPGFSTSKKLDKLGMRGSNTCELVFEDCEVPAANILGHLGKGVYVLMSGLDLERLVLAGGPLGIMQAVLDHTIPYLHMREAFGQKIGHFQLMQGKMADMYTRLMACRQYVYNVAKACDEGHCTTKDCAGVILYSAECATQVALDGIQCLGGNGYINDFPMGRFLRDAKLYEIGAGTSEVRRLVIGRAFNADFH</sequence>
<proteinExistence type="evidence at transcript level"/>
<accession>Q3SZI8</accession>
<keyword id="KW-0007">Acetylation</keyword>
<keyword id="KW-0274">FAD</keyword>
<keyword id="KW-0285">Flavoprotein</keyword>
<keyword id="KW-0496">Mitochondrion</keyword>
<keyword id="KW-0560">Oxidoreductase</keyword>
<keyword id="KW-1185">Reference proteome</keyword>
<keyword id="KW-0809">Transit peptide</keyword>
<feature type="transit peptide" description="Mitochondrion" evidence="2">
    <location>
        <begin position="1"/>
        <end position="32"/>
    </location>
</feature>
<feature type="chain" id="PRO_0000281993" description="Isovaleryl-CoA dehydrogenase, mitochondrial">
    <location>
        <begin position="33"/>
        <end position="426"/>
    </location>
</feature>
<feature type="active site" description="Proton acceptor" evidence="2">
    <location>
        <position position="286"/>
    </location>
</feature>
<feature type="binding site" evidence="2">
    <location>
        <begin position="165"/>
        <end position="174"/>
    </location>
    <ligand>
        <name>FAD</name>
        <dbReference type="ChEBI" id="CHEBI:57692"/>
    </ligand>
</feature>
<feature type="binding site" evidence="2">
    <location>
        <position position="174"/>
    </location>
    <ligand>
        <name>substrate</name>
    </ligand>
</feature>
<feature type="binding site" evidence="2">
    <location>
        <begin position="198"/>
        <end position="200"/>
    </location>
    <ligand>
        <name>FAD</name>
        <dbReference type="ChEBI" id="CHEBI:57692"/>
    </ligand>
</feature>
<feature type="binding site" evidence="2">
    <location>
        <begin position="222"/>
        <end position="223"/>
    </location>
    <ligand>
        <name>substrate</name>
    </ligand>
</feature>
<feature type="binding site" evidence="2">
    <location>
        <position position="277"/>
    </location>
    <ligand>
        <name>substrate</name>
    </ligand>
</feature>
<feature type="binding site" evidence="2">
    <location>
        <begin position="284"/>
        <end position="287"/>
    </location>
    <ligand>
        <name>substrate</name>
    </ligand>
</feature>
<feature type="binding site" evidence="2">
    <location>
        <position position="312"/>
    </location>
    <ligand>
        <name>FAD</name>
        <dbReference type="ChEBI" id="CHEBI:57692"/>
    </ligand>
</feature>
<feature type="binding site" evidence="2">
    <location>
        <position position="323"/>
    </location>
    <ligand>
        <name>FAD</name>
        <dbReference type="ChEBI" id="CHEBI:57692"/>
    </ligand>
</feature>
<feature type="binding site" evidence="2">
    <location>
        <begin position="380"/>
        <end position="384"/>
    </location>
    <ligand>
        <name>FAD</name>
        <dbReference type="ChEBI" id="CHEBI:57692"/>
    </ligand>
</feature>
<feature type="binding site" evidence="2">
    <location>
        <begin position="407"/>
        <end position="408"/>
    </location>
    <ligand>
        <name>substrate</name>
    </ligand>
</feature>
<feature type="binding site" evidence="2">
    <location>
        <begin position="409"/>
        <end position="411"/>
    </location>
    <ligand>
        <name>FAD</name>
        <dbReference type="ChEBI" id="CHEBI:57692"/>
    </ligand>
</feature>
<feature type="modified residue" description="N6-acetyllysine; alternate" evidence="3">
    <location>
        <position position="58"/>
    </location>
</feature>
<feature type="modified residue" description="N6-succinyllysine; alternate" evidence="3">
    <location>
        <position position="58"/>
    </location>
</feature>
<feature type="modified residue" description="N6-acetyllysine; alternate" evidence="2">
    <location>
        <position position="78"/>
    </location>
</feature>
<feature type="modified residue" description="N6-succinyllysine; alternate" evidence="3">
    <location>
        <position position="78"/>
    </location>
</feature>
<feature type="modified residue" description="N6-acetyllysine" evidence="3">
    <location>
        <position position="241"/>
    </location>
</feature>
<feature type="modified residue" description="N6-succinyllysine" evidence="3">
    <location>
        <position position="318"/>
    </location>
</feature>
<gene>
    <name type="primary">IVD</name>
</gene>
<organism>
    <name type="scientific">Bos taurus</name>
    <name type="common">Bovine</name>
    <dbReference type="NCBI Taxonomy" id="9913"/>
    <lineage>
        <taxon>Eukaryota</taxon>
        <taxon>Metazoa</taxon>
        <taxon>Chordata</taxon>
        <taxon>Craniata</taxon>
        <taxon>Vertebrata</taxon>
        <taxon>Euteleostomi</taxon>
        <taxon>Mammalia</taxon>
        <taxon>Eutheria</taxon>
        <taxon>Laurasiatheria</taxon>
        <taxon>Artiodactyla</taxon>
        <taxon>Ruminantia</taxon>
        <taxon>Pecora</taxon>
        <taxon>Bovidae</taxon>
        <taxon>Bovinae</taxon>
        <taxon>Bos</taxon>
    </lineage>
</organism>
<reference key="1">
    <citation type="submission" date="2005-08" db="EMBL/GenBank/DDBJ databases">
        <authorList>
            <consortium name="NIH - Mammalian Gene Collection (MGC) project"/>
        </authorList>
    </citation>
    <scope>NUCLEOTIDE SEQUENCE [LARGE SCALE MRNA]</scope>
    <source>
        <strain>Crossbred X Angus</strain>
        <tissue>Ileum</tissue>
    </source>
</reference>